<comment type="function">
    <text evidence="1">Catalyzes the ATP-dependent phosphorylation of N-acetyl-L-glutamate.</text>
</comment>
<comment type="catalytic activity">
    <reaction evidence="1">
        <text>N-acetyl-L-glutamate + ATP = N-acetyl-L-glutamyl 5-phosphate + ADP</text>
        <dbReference type="Rhea" id="RHEA:14629"/>
        <dbReference type="ChEBI" id="CHEBI:30616"/>
        <dbReference type="ChEBI" id="CHEBI:44337"/>
        <dbReference type="ChEBI" id="CHEBI:57936"/>
        <dbReference type="ChEBI" id="CHEBI:456216"/>
        <dbReference type="EC" id="2.7.2.8"/>
    </reaction>
</comment>
<comment type="pathway">
    <text evidence="1">Amino-acid biosynthesis; L-arginine biosynthesis; N(2)-acetyl-L-ornithine from L-glutamate: step 2/4.</text>
</comment>
<comment type="subcellular location">
    <subcellularLocation>
        <location evidence="1">Cytoplasm</location>
    </subcellularLocation>
</comment>
<comment type="similarity">
    <text evidence="1">Belongs to the acetylglutamate kinase family. ArgB subfamily.</text>
</comment>
<organism>
    <name type="scientific">Campylobacter hominis (strain ATCC BAA-381 / DSM 21671 / CCUG 45161 / LMG 19568 / NCTC 13146 / CH001A)</name>
    <dbReference type="NCBI Taxonomy" id="360107"/>
    <lineage>
        <taxon>Bacteria</taxon>
        <taxon>Pseudomonadati</taxon>
        <taxon>Campylobacterota</taxon>
        <taxon>Epsilonproteobacteria</taxon>
        <taxon>Campylobacterales</taxon>
        <taxon>Campylobacteraceae</taxon>
        <taxon>Campylobacter</taxon>
    </lineage>
</organism>
<gene>
    <name evidence="1" type="primary">argB</name>
    <name type="ordered locus">CHAB381_1022</name>
</gene>
<proteinExistence type="inferred from homology"/>
<name>ARGB_CAMHC</name>
<sequence>MIKKSKTAEVIISALPYIRKFRDKIFVIKYGGAAQTDDNLKLNFARDIVLLHMVGIKIIIIHGGGKKINQTLDLLGVKSEFADGLRITDKKSIEIVEMVLSGAVNKQITALLNQNGAKAIGICGKDANLLEAEVLSGGKYGFVGEIKNVNVNFLKDLLTNDYIPVIAPIAANEKNETFNINADLCASKIASALKADKIVFLSDIDGVLDKNGELISKLNPNLIENLKKDGTISGGMIPKIDACVECIENGVKNAHIINGKIPHSILLELFTDNGIGSMVKEVF</sequence>
<dbReference type="EC" id="2.7.2.8" evidence="1"/>
<dbReference type="EMBL" id="CP000776">
    <property type="protein sequence ID" value="ABS51374.1"/>
    <property type="molecule type" value="Genomic_DNA"/>
</dbReference>
<dbReference type="RefSeq" id="WP_012108879.1">
    <property type="nucleotide sequence ID" value="NC_009714.1"/>
</dbReference>
<dbReference type="SMR" id="A7I241"/>
<dbReference type="STRING" id="360107.CHAB381_1022"/>
<dbReference type="KEGG" id="cha:CHAB381_1022"/>
<dbReference type="eggNOG" id="COG0548">
    <property type="taxonomic scope" value="Bacteria"/>
</dbReference>
<dbReference type="HOGENOM" id="CLU_053680_0_0_7"/>
<dbReference type="OrthoDB" id="9803155at2"/>
<dbReference type="UniPathway" id="UPA00068">
    <property type="reaction ID" value="UER00107"/>
</dbReference>
<dbReference type="Proteomes" id="UP000002407">
    <property type="component" value="Chromosome"/>
</dbReference>
<dbReference type="GO" id="GO:0005737">
    <property type="term" value="C:cytoplasm"/>
    <property type="evidence" value="ECO:0007669"/>
    <property type="project" value="UniProtKB-SubCell"/>
</dbReference>
<dbReference type="GO" id="GO:0003991">
    <property type="term" value="F:acetylglutamate kinase activity"/>
    <property type="evidence" value="ECO:0007669"/>
    <property type="project" value="UniProtKB-UniRule"/>
</dbReference>
<dbReference type="GO" id="GO:0005524">
    <property type="term" value="F:ATP binding"/>
    <property type="evidence" value="ECO:0007669"/>
    <property type="project" value="UniProtKB-UniRule"/>
</dbReference>
<dbReference type="GO" id="GO:0042450">
    <property type="term" value="P:arginine biosynthetic process via ornithine"/>
    <property type="evidence" value="ECO:0007669"/>
    <property type="project" value="UniProtKB-UniRule"/>
</dbReference>
<dbReference type="GO" id="GO:0006526">
    <property type="term" value="P:L-arginine biosynthetic process"/>
    <property type="evidence" value="ECO:0007669"/>
    <property type="project" value="UniProtKB-UniPathway"/>
</dbReference>
<dbReference type="CDD" id="cd04250">
    <property type="entry name" value="AAK_NAGK-C"/>
    <property type="match status" value="1"/>
</dbReference>
<dbReference type="FunFam" id="3.40.1160.10:FF:000004">
    <property type="entry name" value="Acetylglutamate kinase"/>
    <property type="match status" value="1"/>
</dbReference>
<dbReference type="Gene3D" id="3.40.1160.10">
    <property type="entry name" value="Acetylglutamate kinase-like"/>
    <property type="match status" value="1"/>
</dbReference>
<dbReference type="HAMAP" id="MF_00082">
    <property type="entry name" value="ArgB"/>
    <property type="match status" value="1"/>
</dbReference>
<dbReference type="InterPro" id="IPR036393">
    <property type="entry name" value="AceGlu_kinase-like_sf"/>
</dbReference>
<dbReference type="InterPro" id="IPR004662">
    <property type="entry name" value="AcgluKinase_fam"/>
</dbReference>
<dbReference type="InterPro" id="IPR037528">
    <property type="entry name" value="ArgB"/>
</dbReference>
<dbReference type="InterPro" id="IPR001048">
    <property type="entry name" value="Asp/Glu/Uridylate_kinase"/>
</dbReference>
<dbReference type="InterPro" id="IPR001057">
    <property type="entry name" value="Glu/AcGlu_kinase"/>
</dbReference>
<dbReference type="InterPro" id="IPR041727">
    <property type="entry name" value="NAGK-C"/>
</dbReference>
<dbReference type="NCBIfam" id="TIGR00761">
    <property type="entry name" value="argB"/>
    <property type="match status" value="1"/>
</dbReference>
<dbReference type="PANTHER" id="PTHR23342">
    <property type="entry name" value="N-ACETYLGLUTAMATE SYNTHASE"/>
    <property type="match status" value="1"/>
</dbReference>
<dbReference type="PANTHER" id="PTHR23342:SF0">
    <property type="entry name" value="N-ACETYLGLUTAMATE SYNTHASE, MITOCHONDRIAL"/>
    <property type="match status" value="1"/>
</dbReference>
<dbReference type="Pfam" id="PF00696">
    <property type="entry name" value="AA_kinase"/>
    <property type="match status" value="1"/>
</dbReference>
<dbReference type="PIRSF" id="PIRSF000728">
    <property type="entry name" value="NAGK"/>
    <property type="match status" value="1"/>
</dbReference>
<dbReference type="PRINTS" id="PR00474">
    <property type="entry name" value="GLU5KINASE"/>
</dbReference>
<dbReference type="SUPFAM" id="SSF53633">
    <property type="entry name" value="Carbamate kinase-like"/>
    <property type="match status" value="1"/>
</dbReference>
<reference key="1">
    <citation type="submission" date="2007-07" db="EMBL/GenBank/DDBJ databases">
        <title>Complete genome sequence of Campylobacter hominis ATCC BAA-381, a commensal isolated from the human gastrointestinal tract.</title>
        <authorList>
            <person name="Fouts D.E."/>
            <person name="Mongodin E.F."/>
            <person name="Puiu D."/>
            <person name="Sebastian Y."/>
            <person name="Miller W.G."/>
            <person name="Mandrell R.E."/>
            <person name="Nelson K.E."/>
        </authorList>
    </citation>
    <scope>NUCLEOTIDE SEQUENCE [LARGE SCALE GENOMIC DNA]</scope>
    <source>
        <strain>ATCC BAA-381 / DSM 21671 / CCUG 45161 / LMG 19568 / NCTC 13146 / CH001A</strain>
    </source>
</reference>
<protein>
    <recommendedName>
        <fullName evidence="1">Acetylglutamate kinase</fullName>
        <ecNumber evidence="1">2.7.2.8</ecNumber>
    </recommendedName>
    <alternativeName>
        <fullName evidence="1">N-acetyl-L-glutamate 5-phosphotransferase</fullName>
    </alternativeName>
    <alternativeName>
        <fullName evidence="1">NAG kinase</fullName>
        <shortName evidence="1">NAGK</shortName>
    </alternativeName>
</protein>
<keyword id="KW-0028">Amino-acid biosynthesis</keyword>
<keyword id="KW-0055">Arginine biosynthesis</keyword>
<keyword id="KW-0067">ATP-binding</keyword>
<keyword id="KW-0963">Cytoplasm</keyword>
<keyword id="KW-0418">Kinase</keyword>
<keyword id="KW-0547">Nucleotide-binding</keyword>
<keyword id="KW-1185">Reference proteome</keyword>
<keyword id="KW-0808">Transferase</keyword>
<accession>A7I241</accession>
<feature type="chain" id="PRO_1000010494" description="Acetylglutamate kinase">
    <location>
        <begin position="1"/>
        <end position="283"/>
    </location>
</feature>
<feature type="binding site" evidence="1">
    <location>
        <begin position="64"/>
        <end position="65"/>
    </location>
    <ligand>
        <name>substrate</name>
    </ligand>
</feature>
<feature type="binding site" evidence="1">
    <location>
        <position position="86"/>
    </location>
    <ligand>
        <name>substrate</name>
    </ligand>
</feature>
<feature type="binding site" evidence="1">
    <location>
        <position position="179"/>
    </location>
    <ligand>
        <name>substrate</name>
    </ligand>
</feature>
<feature type="site" description="Transition state stabilizer" evidence="1">
    <location>
        <position position="29"/>
    </location>
</feature>
<feature type="site" description="Transition state stabilizer" evidence="1">
    <location>
        <position position="239"/>
    </location>
</feature>
<evidence type="ECO:0000255" key="1">
    <source>
        <dbReference type="HAMAP-Rule" id="MF_00082"/>
    </source>
</evidence>